<keyword id="KW-0067">ATP-binding</keyword>
<keyword id="KW-0963">Cytoplasm</keyword>
<keyword id="KW-0436">Ligase</keyword>
<keyword id="KW-0547">Nucleotide-binding</keyword>
<keyword id="KW-1185">Reference proteome</keyword>
<sequence>MADLINILNHFVQEQPEAVAVRHTNDELTYKQLDEESSKLAHLLQDSKKPMILYGHMSPYMIVGMIGAIKSGCGYVPIDTSVPKERVNMIIDKVQPEIIFNTSDETLEQTNAQVLKVSDIQDSQYPIVFDSQMKQNDVVYTIFTSGSTGEPKGVQIEYASLNEFAEWMVSLNKTGTGKEWLNQAPFSFDLSVMAIYPCLTSGGTLNLVDKDMIKKPKLLNEMLVQTPMNVWVSTPSFIEMCLLLPNLNEQQYNSLKQFFFCGEILSHKTAKVLVERFPNSMIYNTYGPTEATVAVTSIQITEEILNQYNPLPVGVARPGTRLFATEEGELVIEGQSVSLGYLKNEEKTAAVFNFEDGVRTYHTGDKAKIEDGLWFIQGRIDFQIKLNGYRMELEEIETQLRQSKHVREAVVVPVYKNGKVVHLIGAVVPTESVEDNLAMTTQIKHELKSRLPEYMIPRKFEWMERLPLTLNGKLDRKKIAEVVNG</sequence>
<feature type="chain" id="PRO_0000213157" description="D-alanine--D-alanyl carrier protein ligase">
    <location>
        <begin position="1"/>
        <end position="485"/>
    </location>
</feature>
<feature type="binding site" evidence="1">
    <location>
        <begin position="144"/>
        <end position="145"/>
    </location>
    <ligand>
        <name>ATP</name>
        <dbReference type="ChEBI" id="CHEBI:30616"/>
    </ligand>
</feature>
<feature type="binding site" evidence="1">
    <location>
        <position position="189"/>
    </location>
    <ligand>
        <name>D-alanine</name>
        <dbReference type="ChEBI" id="CHEBI:57416"/>
    </ligand>
</feature>
<feature type="binding site" evidence="1">
    <location>
        <begin position="284"/>
        <end position="289"/>
    </location>
    <ligand>
        <name>ATP</name>
        <dbReference type="ChEBI" id="CHEBI:30616"/>
    </ligand>
</feature>
<feature type="binding site" evidence="1">
    <location>
        <position position="293"/>
    </location>
    <ligand>
        <name>D-alanine</name>
        <dbReference type="ChEBI" id="CHEBI:57416"/>
    </ligand>
</feature>
<feature type="binding site" evidence="1">
    <location>
        <position position="365"/>
    </location>
    <ligand>
        <name>ATP</name>
        <dbReference type="ChEBI" id="CHEBI:30616"/>
    </ligand>
</feature>
<feature type="binding site" evidence="1">
    <location>
        <position position="473"/>
    </location>
    <ligand>
        <name>ATP</name>
        <dbReference type="ChEBI" id="CHEBI:30616"/>
    </ligand>
</feature>
<feature type="binding site" evidence="1">
    <location>
        <position position="473"/>
    </location>
    <ligand>
        <name>D-alanine</name>
        <dbReference type="ChEBI" id="CHEBI:57416"/>
    </ligand>
</feature>
<proteinExistence type="inferred from homology"/>
<name>DLTA_STAEQ</name>
<organism>
    <name type="scientific">Staphylococcus epidermidis (strain ATCC 35984 / DSM 28319 / BCRC 17069 / CCUG 31568 / BM 3577 / RP62A)</name>
    <dbReference type="NCBI Taxonomy" id="176279"/>
    <lineage>
        <taxon>Bacteria</taxon>
        <taxon>Bacillati</taxon>
        <taxon>Bacillota</taxon>
        <taxon>Bacilli</taxon>
        <taxon>Bacillales</taxon>
        <taxon>Staphylococcaceae</taxon>
        <taxon>Staphylococcus</taxon>
    </lineage>
</organism>
<accession>Q5HQN0</accession>
<gene>
    <name evidence="1" type="primary">dltA</name>
    <name type="ordered locus">SERP0518</name>
</gene>
<comment type="function">
    <text evidence="1">Catalyzes the first step in the D-alanylation of lipoteichoic acid (LTA), the activation of D-alanine and its transfer onto the D-alanyl carrier protein (Dcp) DltC. In an ATP-dependent two-step reaction, forms a high energy D-alanyl-AMP intermediate, followed by transfer of the D-alanyl residue as a thiol ester to the phosphopantheinyl prosthetic group of the Dcp. D-alanylation of LTA plays an important role in modulating the properties of the cell wall in Gram-positive bacteria, influencing the net charge of the cell wall.</text>
</comment>
<comment type="catalytic activity">
    <reaction evidence="1">
        <text>holo-[D-alanyl-carrier protein] + D-alanine + ATP = D-alanyl-[D-alanyl-carrier protein] + AMP + diphosphate</text>
        <dbReference type="Rhea" id="RHEA:55132"/>
        <dbReference type="Rhea" id="RHEA-COMP:14102"/>
        <dbReference type="Rhea" id="RHEA-COMP:14103"/>
        <dbReference type="ChEBI" id="CHEBI:30616"/>
        <dbReference type="ChEBI" id="CHEBI:33019"/>
        <dbReference type="ChEBI" id="CHEBI:57416"/>
        <dbReference type="ChEBI" id="CHEBI:64479"/>
        <dbReference type="ChEBI" id="CHEBI:138620"/>
        <dbReference type="ChEBI" id="CHEBI:456215"/>
        <dbReference type="EC" id="6.2.1.54"/>
    </reaction>
</comment>
<comment type="pathway">
    <text evidence="1">Cell wall biogenesis; lipoteichoic acid biosynthesis.</text>
</comment>
<comment type="subcellular location">
    <subcellularLocation>
        <location evidence="1">Cytoplasm</location>
    </subcellularLocation>
</comment>
<comment type="similarity">
    <text evidence="1">Belongs to the ATP-dependent AMP-binding enzyme family. DltA subfamily.</text>
</comment>
<dbReference type="EC" id="6.2.1.54" evidence="1"/>
<dbReference type="EMBL" id="CP000029">
    <property type="protein sequence ID" value="AAW53907.1"/>
    <property type="molecule type" value="Genomic_DNA"/>
</dbReference>
<dbReference type="RefSeq" id="WP_010959152.1">
    <property type="nucleotide sequence ID" value="NC_002976.3"/>
</dbReference>
<dbReference type="SMR" id="Q5HQN0"/>
<dbReference type="STRING" id="176279.SERP0518"/>
<dbReference type="KEGG" id="ser:SERP0518"/>
<dbReference type="eggNOG" id="COG1020">
    <property type="taxonomic scope" value="Bacteria"/>
</dbReference>
<dbReference type="HOGENOM" id="CLU_000022_2_12_9"/>
<dbReference type="UniPathway" id="UPA00556"/>
<dbReference type="Proteomes" id="UP000000531">
    <property type="component" value="Chromosome"/>
</dbReference>
<dbReference type="GO" id="GO:0005737">
    <property type="term" value="C:cytoplasm"/>
    <property type="evidence" value="ECO:0007669"/>
    <property type="project" value="UniProtKB-SubCell"/>
</dbReference>
<dbReference type="GO" id="GO:0005524">
    <property type="term" value="F:ATP binding"/>
    <property type="evidence" value="ECO:0007669"/>
    <property type="project" value="UniProtKB-KW"/>
</dbReference>
<dbReference type="GO" id="GO:0047473">
    <property type="term" value="F:D-alanine [D-alanyl carrier protein] ligase activity"/>
    <property type="evidence" value="ECO:0007669"/>
    <property type="project" value="UniProtKB-UniRule"/>
</dbReference>
<dbReference type="GO" id="GO:0070395">
    <property type="term" value="P:lipoteichoic acid biosynthetic process"/>
    <property type="evidence" value="ECO:0007669"/>
    <property type="project" value="UniProtKB-UniRule"/>
</dbReference>
<dbReference type="CDD" id="cd05945">
    <property type="entry name" value="DltA"/>
    <property type="match status" value="1"/>
</dbReference>
<dbReference type="FunFam" id="3.30.300.30:FF:000012">
    <property type="entry name" value="D-alanine--D-alanyl carrier protein ligase"/>
    <property type="match status" value="1"/>
</dbReference>
<dbReference type="Gene3D" id="3.30.300.30">
    <property type="match status" value="1"/>
</dbReference>
<dbReference type="Gene3D" id="3.40.50.12780">
    <property type="entry name" value="N-terminal domain of ligase-like"/>
    <property type="match status" value="1"/>
</dbReference>
<dbReference type="HAMAP" id="MF_00593">
    <property type="entry name" value="DltA"/>
    <property type="match status" value="1"/>
</dbReference>
<dbReference type="InterPro" id="IPR010071">
    <property type="entry name" value="AA_adenyl_dom"/>
</dbReference>
<dbReference type="InterPro" id="IPR025110">
    <property type="entry name" value="AMP-bd_C"/>
</dbReference>
<dbReference type="InterPro" id="IPR045851">
    <property type="entry name" value="AMP-bd_C_sf"/>
</dbReference>
<dbReference type="InterPro" id="IPR000873">
    <property type="entry name" value="AMP-dep_synth/lig_dom"/>
</dbReference>
<dbReference type="InterPro" id="IPR042099">
    <property type="entry name" value="ANL_N_sf"/>
</dbReference>
<dbReference type="InterPro" id="IPR010072">
    <property type="entry name" value="DltA"/>
</dbReference>
<dbReference type="InterPro" id="IPR044507">
    <property type="entry name" value="DltA-like"/>
</dbReference>
<dbReference type="NCBIfam" id="TIGR01733">
    <property type="entry name" value="AA-adenyl-dom"/>
    <property type="match status" value="1"/>
</dbReference>
<dbReference type="NCBIfam" id="TIGR01734">
    <property type="entry name" value="D-ala-DACP-lig"/>
    <property type="match status" value="1"/>
</dbReference>
<dbReference type="NCBIfam" id="NF003417">
    <property type="entry name" value="PRK04813.1"/>
    <property type="match status" value="1"/>
</dbReference>
<dbReference type="PANTHER" id="PTHR45398">
    <property type="match status" value="1"/>
</dbReference>
<dbReference type="PANTHER" id="PTHR45398:SF1">
    <property type="entry name" value="ENZYME, PUTATIVE (JCVI)-RELATED"/>
    <property type="match status" value="1"/>
</dbReference>
<dbReference type="Pfam" id="PF00501">
    <property type="entry name" value="AMP-binding"/>
    <property type="match status" value="1"/>
</dbReference>
<dbReference type="Pfam" id="PF13193">
    <property type="entry name" value="AMP-binding_C"/>
    <property type="match status" value="1"/>
</dbReference>
<dbReference type="SUPFAM" id="SSF56801">
    <property type="entry name" value="Acetyl-CoA synthetase-like"/>
    <property type="match status" value="1"/>
</dbReference>
<reference key="1">
    <citation type="journal article" date="2005" name="J. Bacteriol.">
        <title>Insights on evolution of virulence and resistance from the complete genome analysis of an early methicillin-resistant Staphylococcus aureus strain and a biofilm-producing methicillin-resistant Staphylococcus epidermidis strain.</title>
        <authorList>
            <person name="Gill S.R."/>
            <person name="Fouts D.E."/>
            <person name="Archer G.L."/>
            <person name="Mongodin E.F."/>
            <person name="DeBoy R.T."/>
            <person name="Ravel J."/>
            <person name="Paulsen I.T."/>
            <person name="Kolonay J.F."/>
            <person name="Brinkac L.M."/>
            <person name="Beanan M.J."/>
            <person name="Dodson R.J."/>
            <person name="Daugherty S.C."/>
            <person name="Madupu R."/>
            <person name="Angiuoli S.V."/>
            <person name="Durkin A.S."/>
            <person name="Haft D.H."/>
            <person name="Vamathevan J.J."/>
            <person name="Khouri H."/>
            <person name="Utterback T.R."/>
            <person name="Lee C."/>
            <person name="Dimitrov G."/>
            <person name="Jiang L."/>
            <person name="Qin H."/>
            <person name="Weidman J."/>
            <person name="Tran K."/>
            <person name="Kang K.H."/>
            <person name="Hance I.R."/>
            <person name="Nelson K.E."/>
            <person name="Fraser C.M."/>
        </authorList>
    </citation>
    <scope>NUCLEOTIDE SEQUENCE [LARGE SCALE GENOMIC DNA]</scope>
    <source>
        <strain>ATCC 35984 / DSM 28319 / BCRC 17069 / CCUG 31568 / BM 3577 / RP62A</strain>
    </source>
</reference>
<evidence type="ECO:0000255" key="1">
    <source>
        <dbReference type="HAMAP-Rule" id="MF_00593"/>
    </source>
</evidence>
<protein>
    <recommendedName>
        <fullName evidence="1">D-alanine--D-alanyl carrier protein ligase</fullName>
        <shortName evidence="1">DCL</shortName>
        <ecNumber evidence="1">6.2.1.54</ecNumber>
    </recommendedName>
    <alternativeName>
        <fullName evidence="1">D-alanine--poly(phosphoribitol) ligase subunit 1</fullName>
    </alternativeName>
    <alternativeName>
        <fullName evidence="1">D-alanine-activating enzyme</fullName>
        <shortName evidence="1">DAE</shortName>
    </alternativeName>
</protein>